<keyword id="KW-0997">Cell inner membrane</keyword>
<keyword id="KW-1003">Cell membrane</keyword>
<keyword id="KW-0342">GTP-binding</keyword>
<keyword id="KW-0378">Hydrolase</keyword>
<keyword id="KW-0472">Membrane</keyword>
<keyword id="KW-0547">Nucleotide-binding</keyword>
<keyword id="KW-0648">Protein biosynthesis</keyword>
<reference key="1">
    <citation type="journal article" date="2005" name="Jpn. Agric. Res. Q.">
        <title>Genome sequence of Xanthomonas oryzae pv. oryzae suggests contribution of large numbers of effector genes and insertion sequences to its race diversity.</title>
        <authorList>
            <person name="Ochiai H."/>
            <person name="Inoue Y."/>
            <person name="Takeya M."/>
            <person name="Sasaki A."/>
            <person name="Kaku H."/>
        </authorList>
    </citation>
    <scope>NUCLEOTIDE SEQUENCE [LARGE SCALE GENOMIC DNA]</scope>
    <source>
        <strain>MAFF 311018</strain>
    </source>
</reference>
<accession>Q2P4M4</accession>
<comment type="function">
    <text evidence="1">Required for accurate and efficient protein synthesis under certain stress conditions. May act as a fidelity factor of the translation reaction, by catalyzing a one-codon backward translocation of tRNAs on improperly translocated ribosomes. Back-translocation proceeds from a post-translocation (POST) complex to a pre-translocation (PRE) complex, thus giving elongation factor G a second chance to translocate the tRNAs correctly. Binds to ribosomes in a GTP-dependent manner.</text>
</comment>
<comment type="catalytic activity">
    <reaction evidence="1">
        <text>GTP + H2O = GDP + phosphate + H(+)</text>
        <dbReference type="Rhea" id="RHEA:19669"/>
        <dbReference type="ChEBI" id="CHEBI:15377"/>
        <dbReference type="ChEBI" id="CHEBI:15378"/>
        <dbReference type="ChEBI" id="CHEBI:37565"/>
        <dbReference type="ChEBI" id="CHEBI:43474"/>
        <dbReference type="ChEBI" id="CHEBI:58189"/>
        <dbReference type="EC" id="3.6.5.n1"/>
    </reaction>
</comment>
<comment type="subcellular location">
    <subcellularLocation>
        <location evidence="1">Cell inner membrane</location>
        <topology evidence="1">Peripheral membrane protein</topology>
        <orientation evidence="1">Cytoplasmic side</orientation>
    </subcellularLocation>
</comment>
<comment type="similarity">
    <text evidence="1">Belongs to the TRAFAC class translation factor GTPase superfamily. Classic translation factor GTPase family. LepA subfamily.</text>
</comment>
<gene>
    <name evidence="1" type="primary">lepA</name>
    <name type="ordered locus">XOO1748</name>
</gene>
<feature type="chain" id="PRO_0000265725" description="Elongation factor 4">
    <location>
        <begin position="1"/>
        <end position="601"/>
    </location>
</feature>
<feature type="domain" description="tr-type G">
    <location>
        <begin position="7"/>
        <end position="189"/>
    </location>
</feature>
<feature type="binding site" evidence="1">
    <location>
        <begin position="19"/>
        <end position="24"/>
    </location>
    <ligand>
        <name>GTP</name>
        <dbReference type="ChEBI" id="CHEBI:37565"/>
    </ligand>
</feature>
<feature type="binding site" evidence="1">
    <location>
        <begin position="136"/>
        <end position="139"/>
    </location>
    <ligand>
        <name>GTP</name>
        <dbReference type="ChEBI" id="CHEBI:37565"/>
    </ligand>
</feature>
<sequence>MSSDSMRNIRNFSIIAHVDHGKSTLADRIIQLCGGLQAREMEAQVLDSNPIERERGITIKAQSVSLPYTAKDGQVYHLNFIDTPGHVDFSYEVSRSLAACEGALLVVDAAQGVEAQSVANCYTAVEQGLEVVPVLNKIDLPTADVDRAKAEIEAVIGIDAEDAVAVSAKTGLNIDLVLEAIVHRIPPPAPRDTDKLQALIIDSWFDNYLGVVSLVRVMQGEIKPGSKILVMSTGRTHLVDKVGVFTPKRKELSALGAGEVGWINASIKDVHGAPVGDTLTLAADPAPHALPGFQEMQPRVFAGLFPVDAEDYPDLREALDKLRLNDAALRFEPESSEAMGFGFRCGFLGMLHMEIVQERLEREYNLNLISTAPTVVYEVLKTDGSVIPMDNPSKLPPLNNVEEIREPIIRANILTPPDYVGNIITLCEEKRGSQIGINYLGSQVQISYELPMAEVVLDFFDKLKSVSRGYASLDYHFLRFDPGPFVRVDTLINGDKVDALSIIVHRSYADRRGRELCEKMKDLIPRQMFDVAIQAAVGSQIISRSTVKAMRKNVLAKCYGGDVSRKKKLLEKQKEGKKRMKQVGRVEIPQEAFLAVLQMDK</sequence>
<dbReference type="EC" id="3.6.5.n1" evidence="1"/>
<dbReference type="EMBL" id="AP008229">
    <property type="protein sequence ID" value="BAE68503.1"/>
    <property type="molecule type" value="Genomic_DNA"/>
</dbReference>
<dbReference type="SMR" id="Q2P4M4"/>
<dbReference type="KEGG" id="xom:XOO1748"/>
<dbReference type="HOGENOM" id="CLU_009995_3_3_6"/>
<dbReference type="GO" id="GO:0005886">
    <property type="term" value="C:plasma membrane"/>
    <property type="evidence" value="ECO:0007669"/>
    <property type="project" value="UniProtKB-SubCell"/>
</dbReference>
<dbReference type="GO" id="GO:0005525">
    <property type="term" value="F:GTP binding"/>
    <property type="evidence" value="ECO:0007669"/>
    <property type="project" value="UniProtKB-UniRule"/>
</dbReference>
<dbReference type="GO" id="GO:0003924">
    <property type="term" value="F:GTPase activity"/>
    <property type="evidence" value="ECO:0007669"/>
    <property type="project" value="UniProtKB-UniRule"/>
</dbReference>
<dbReference type="GO" id="GO:0097216">
    <property type="term" value="F:guanosine tetraphosphate binding"/>
    <property type="evidence" value="ECO:0007669"/>
    <property type="project" value="UniProtKB-ARBA"/>
</dbReference>
<dbReference type="GO" id="GO:0043022">
    <property type="term" value="F:ribosome binding"/>
    <property type="evidence" value="ECO:0007669"/>
    <property type="project" value="UniProtKB-UniRule"/>
</dbReference>
<dbReference type="GO" id="GO:0003746">
    <property type="term" value="F:translation elongation factor activity"/>
    <property type="evidence" value="ECO:0007669"/>
    <property type="project" value="UniProtKB-UniRule"/>
</dbReference>
<dbReference type="GO" id="GO:0045727">
    <property type="term" value="P:positive regulation of translation"/>
    <property type="evidence" value="ECO:0007669"/>
    <property type="project" value="UniProtKB-UniRule"/>
</dbReference>
<dbReference type="CDD" id="cd03699">
    <property type="entry name" value="EF4_II"/>
    <property type="match status" value="1"/>
</dbReference>
<dbReference type="CDD" id="cd16260">
    <property type="entry name" value="EF4_III"/>
    <property type="match status" value="1"/>
</dbReference>
<dbReference type="CDD" id="cd01890">
    <property type="entry name" value="LepA"/>
    <property type="match status" value="1"/>
</dbReference>
<dbReference type="CDD" id="cd03709">
    <property type="entry name" value="lepA_C"/>
    <property type="match status" value="1"/>
</dbReference>
<dbReference type="FunFam" id="3.40.50.300:FF:000078">
    <property type="entry name" value="Elongation factor 4"/>
    <property type="match status" value="1"/>
</dbReference>
<dbReference type="FunFam" id="2.40.30.10:FF:000015">
    <property type="entry name" value="Translation factor GUF1, mitochondrial"/>
    <property type="match status" value="1"/>
</dbReference>
<dbReference type="FunFam" id="3.30.70.240:FF:000007">
    <property type="entry name" value="Translation factor GUF1, mitochondrial"/>
    <property type="match status" value="1"/>
</dbReference>
<dbReference type="FunFam" id="3.30.70.2570:FF:000001">
    <property type="entry name" value="Translation factor GUF1, mitochondrial"/>
    <property type="match status" value="1"/>
</dbReference>
<dbReference type="FunFam" id="3.30.70.870:FF:000004">
    <property type="entry name" value="Translation factor GUF1, mitochondrial"/>
    <property type="match status" value="1"/>
</dbReference>
<dbReference type="Gene3D" id="3.30.70.240">
    <property type="match status" value="1"/>
</dbReference>
<dbReference type="Gene3D" id="3.30.70.2570">
    <property type="entry name" value="Elongation factor 4, C-terminal domain"/>
    <property type="match status" value="1"/>
</dbReference>
<dbReference type="Gene3D" id="3.30.70.870">
    <property type="entry name" value="Elongation Factor G (Translational Gtpase), domain 3"/>
    <property type="match status" value="1"/>
</dbReference>
<dbReference type="Gene3D" id="3.40.50.300">
    <property type="entry name" value="P-loop containing nucleotide triphosphate hydrolases"/>
    <property type="match status" value="1"/>
</dbReference>
<dbReference type="Gene3D" id="2.40.30.10">
    <property type="entry name" value="Translation factors"/>
    <property type="match status" value="1"/>
</dbReference>
<dbReference type="HAMAP" id="MF_00071">
    <property type="entry name" value="LepA"/>
    <property type="match status" value="1"/>
</dbReference>
<dbReference type="InterPro" id="IPR006297">
    <property type="entry name" value="EF-4"/>
</dbReference>
<dbReference type="InterPro" id="IPR035647">
    <property type="entry name" value="EFG_III/V"/>
</dbReference>
<dbReference type="InterPro" id="IPR000640">
    <property type="entry name" value="EFG_V-like"/>
</dbReference>
<dbReference type="InterPro" id="IPR004161">
    <property type="entry name" value="EFTu-like_2"/>
</dbReference>
<dbReference type="InterPro" id="IPR031157">
    <property type="entry name" value="G_TR_CS"/>
</dbReference>
<dbReference type="InterPro" id="IPR038363">
    <property type="entry name" value="LepA_C_sf"/>
</dbReference>
<dbReference type="InterPro" id="IPR013842">
    <property type="entry name" value="LepA_CTD"/>
</dbReference>
<dbReference type="InterPro" id="IPR035654">
    <property type="entry name" value="LepA_IV"/>
</dbReference>
<dbReference type="InterPro" id="IPR027417">
    <property type="entry name" value="P-loop_NTPase"/>
</dbReference>
<dbReference type="InterPro" id="IPR005225">
    <property type="entry name" value="Small_GTP-bd"/>
</dbReference>
<dbReference type="InterPro" id="IPR000795">
    <property type="entry name" value="T_Tr_GTP-bd_dom"/>
</dbReference>
<dbReference type="NCBIfam" id="TIGR01393">
    <property type="entry name" value="lepA"/>
    <property type="match status" value="1"/>
</dbReference>
<dbReference type="NCBIfam" id="TIGR00231">
    <property type="entry name" value="small_GTP"/>
    <property type="match status" value="1"/>
</dbReference>
<dbReference type="PANTHER" id="PTHR43512:SF4">
    <property type="entry name" value="TRANSLATION FACTOR GUF1 HOMOLOG, CHLOROPLASTIC"/>
    <property type="match status" value="1"/>
</dbReference>
<dbReference type="PANTHER" id="PTHR43512">
    <property type="entry name" value="TRANSLATION FACTOR GUF1-RELATED"/>
    <property type="match status" value="1"/>
</dbReference>
<dbReference type="Pfam" id="PF00679">
    <property type="entry name" value="EFG_C"/>
    <property type="match status" value="1"/>
</dbReference>
<dbReference type="Pfam" id="PF00009">
    <property type="entry name" value="GTP_EFTU"/>
    <property type="match status" value="1"/>
</dbReference>
<dbReference type="Pfam" id="PF03144">
    <property type="entry name" value="GTP_EFTU_D2"/>
    <property type="match status" value="1"/>
</dbReference>
<dbReference type="Pfam" id="PF06421">
    <property type="entry name" value="LepA_C"/>
    <property type="match status" value="1"/>
</dbReference>
<dbReference type="PRINTS" id="PR00315">
    <property type="entry name" value="ELONGATNFCT"/>
</dbReference>
<dbReference type="SMART" id="SM00838">
    <property type="entry name" value="EFG_C"/>
    <property type="match status" value="1"/>
</dbReference>
<dbReference type="SUPFAM" id="SSF54980">
    <property type="entry name" value="EF-G C-terminal domain-like"/>
    <property type="match status" value="2"/>
</dbReference>
<dbReference type="SUPFAM" id="SSF52540">
    <property type="entry name" value="P-loop containing nucleoside triphosphate hydrolases"/>
    <property type="match status" value="1"/>
</dbReference>
<dbReference type="PROSITE" id="PS00301">
    <property type="entry name" value="G_TR_1"/>
    <property type="match status" value="1"/>
</dbReference>
<dbReference type="PROSITE" id="PS51722">
    <property type="entry name" value="G_TR_2"/>
    <property type="match status" value="1"/>
</dbReference>
<proteinExistence type="inferred from homology"/>
<organism>
    <name type="scientific">Xanthomonas oryzae pv. oryzae (strain MAFF 311018)</name>
    <dbReference type="NCBI Taxonomy" id="342109"/>
    <lineage>
        <taxon>Bacteria</taxon>
        <taxon>Pseudomonadati</taxon>
        <taxon>Pseudomonadota</taxon>
        <taxon>Gammaproteobacteria</taxon>
        <taxon>Lysobacterales</taxon>
        <taxon>Lysobacteraceae</taxon>
        <taxon>Xanthomonas</taxon>
    </lineage>
</organism>
<evidence type="ECO:0000255" key="1">
    <source>
        <dbReference type="HAMAP-Rule" id="MF_00071"/>
    </source>
</evidence>
<name>LEPA_XANOM</name>
<protein>
    <recommendedName>
        <fullName evidence="1">Elongation factor 4</fullName>
        <shortName evidence="1">EF-4</shortName>
        <ecNumber evidence="1">3.6.5.n1</ecNumber>
    </recommendedName>
    <alternativeName>
        <fullName evidence="1">Ribosomal back-translocase LepA</fullName>
    </alternativeName>
</protein>